<reference key="1">
    <citation type="journal article" date="2006" name="Nat. Biotechnol.">
        <title>Complete genome sequence of the entomopathogenic and metabolically versatile soil bacterium Pseudomonas entomophila.</title>
        <authorList>
            <person name="Vodovar N."/>
            <person name="Vallenet D."/>
            <person name="Cruveiller S."/>
            <person name="Rouy Z."/>
            <person name="Barbe V."/>
            <person name="Acosta C."/>
            <person name="Cattolico L."/>
            <person name="Jubin C."/>
            <person name="Lajus A."/>
            <person name="Segurens B."/>
            <person name="Vacherie B."/>
            <person name="Wincker P."/>
            <person name="Weissenbach J."/>
            <person name="Lemaitre B."/>
            <person name="Medigue C."/>
            <person name="Boccard F."/>
        </authorList>
    </citation>
    <scope>NUCLEOTIDE SEQUENCE [LARGE SCALE GENOMIC DNA]</scope>
    <source>
        <strain>L48</strain>
    </source>
</reference>
<evidence type="ECO:0000255" key="1">
    <source>
        <dbReference type="HAMAP-Rule" id="MF_00179"/>
    </source>
</evidence>
<protein>
    <recommendedName>
        <fullName evidence="1">GTP cyclohydrolase-2</fullName>
        <ecNumber evidence="1">3.5.4.25</ecNumber>
    </recommendedName>
    <alternativeName>
        <fullName evidence="1">GTP cyclohydrolase II</fullName>
    </alternativeName>
</protein>
<organism>
    <name type="scientific">Pseudomonas entomophila (strain L48)</name>
    <dbReference type="NCBI Taxonomy" id="384676"/>
    <lineage>
        <taxon>Bacteria</taxon>
        <taxon>Pseudomonadati</taxon>
        <taxon>Pseudomonadota</taxon>
        <taxon>Gammaproteobacteria</taxon>
        <taxon>Pseudomonadales</taxon>
        <taxon>Pseudomonadaceae</taxon>
        <taxon>Pseudomonas</taxon>
    </lineage>
</organism>
<keyword id="KW-0342">GTP-binding</keyword>
<keyword id="KW-0378">Hydrolase</keyword>
<keyword id="KW-0479">Metal-binding</keyword>
<keyword id="KW-0547">Nucleotide-binding</keyword>
<keyword id="KW-0686">Riboflavin biosynthesis</keyword>
<keyword id="KW-0862">Zinc</keyword>
<gene>
    <name evidence="1" type="primary">ribA</name>
    <name type="ordered locus">PSEEN0596</name>
</gene>
<proteinExistence type="inferred from homology"/>
<sequence length="205" mass="22409">MPVVFVAASKLPTPFAIFTMHGFLDEATGREHVVLSLGDIADGEPVLGRLHSECLTGDALFSQRCDCGSQLEAALQAIAREGRGVLLYLRQEGRGIGLLNKIRAYELQDGGADTVEANERLGFAADQRDYAMCLPMLEHLGVKSLRLMTNNPRKVKALTDMSIKVAERVPLHTGHNPHNRLYLATKADKLGHMMGNKHQGEVPQA</sequence>
<name>RIBA_PSEE4</name>
<dbReference type="EC" id="3.5.4.25" evidence="1"/>
<dbReference type="EMBL" id="CT573326">
    <property type="protein sequence ID" value="CAK13539.1"/>
    <property type="molecule type" value="Genomic_DNA"/>
</dbReference>
<dbReference type="RefSeq" id="WP_011531972.1">
    <property type="nucleotide sequence ID" value="NC_008027.1"/>
</dbReference>
<dbReference type="SMR" id="Q1IFL5"/>
<dbReference type="STRING" id="384676.PSEEN0596"/>
<dbReference type="GeneID" id="32803925"/>
<dbReference type="KEGG" id="pen:PSEEN0596"/>
<dbReference type="eggNOG" id="COG0807">
    <property type="taxonomic scope" value="Bacteria"/>
</dbReference>
<dbReference type="HOGENOM" id="CLU_020273_2_1_6"/>
<dbReference type="OrthoDB" id="9793111at2"/>
<dbReference type="UniPathway" id="UPA00275">
    <property type="reaction ID" value="UER00400"/>
</dbReference>
<dbReference type="Proteomes" id="UP000000658">
    <property type="component" value="Chromosome"/>
</dbReference>
<dbReference type="GO" id="GO:0005829">
    <property type="term" value="C:cytosol"/>
    <property type="evidence" value="ECO:0007669"/>
    <property type="project" value="TreeGrafter"/>
</dbReference>
<dbReference type="GO" id="GO:0005525">
    <property type="term" value="F:GTP binding"/>
    <property type="evidence" value="ECO:0007669"/>
    <property type="project" value="UniProtKB-KW"/>
</dbReference>
<dbReference type="GO" id="GO:0003935">
    <property type="term" value="F:GTP cyclohydrolase II activity"/>
    <property type="evidence" value="ECO:0007669"/>
    <property type="project" value="UniProtKB-UniRule"/>
</dbReference>
<dbReference type="GO" id="GO:0008270">
    <property type="term" value="F:zinc ion binding"/>
    <property type="evidence" value="ECO:0007669"/>
    <property type="project" value="UniProtKB-UniRule"/>
</dbReference>
<dbReference type="GO" id="GO:0009231">
    <property type="term" value="P:riboflavin biosynthetic process"/>
    <property type="evidence" value="ECO:0007669"/>
    <property type="project" value="UniProtKB-UniRule"/>
</dbReference>
<dbReference type="CDD" id="cd00641">
    <property type="entry name" value="GTP_cyclohydro2"/>
    <property type="match status" value="1"/>
</dbReference>
<dbReference type="FunFam" id="3.40.50.10990:FF:000002">
    <property type="entry name" value="GTP cyclohydrolase-2"/>
    <property type="match status" value="1"/>
</dbReference>
<dbReference type="Gene3D" id="3.40.50.10990">
    <property type="entry name" value="GTP cyclohydrolase II"/>
    <property type="match status" value="1"/>
</dbReference>
<dbReference type="HAMAP" id="MF_00179">
    <property type="entry name" value="RibA"/>
    <property type="match status" value="1"/>
</dbReference>
<dbReference type="InterPro" id="IPR032677">
    <property type="entry name" value="GTP_cyclohydro_II"/>
</dbReference>
<dbReference type="InterPro" id="IPR000926">
    <property type="entry name" value="RibA"/>
</dbReference>
<dbReference type="InterPro" id="IPR036144">
    <property type="entry name" value="RibA-like_sf"/>
</dbReference>
<dbReference type="NCBIfam" id="NF001591">
    <property type="entry name" value="PRK00393.1"/>
    <property type="match status" value="1"/>
</dbReference>
<dbReference type="NCBIfam" id="TIGR00505">
    <property type="entry name" value="ribA"/>
    <property type="match status" value="1"/>
</dbReference>
<dbReference type="PANTHER" id="PTHR21327:SF18">
    <property type="entry name" value="3,4-DIHYDROXY-2-BUTANONE 4-PHOSPHATE SYNTHASE"/>
    <property type="match status" value="1"/>
</dbReference>
<dbReference type="PANTHER" id="PTHR21327">
    <property type="entry name" value="GTP CYCLOHYDROLASE II-RELATED"/>
    <property type="match status" value="1"/>
</dbReference>
<dbReference type="Pfam" id="PF00925">
    <property type="entry name" value="GTP_cyclohydro2"/>
    <property type="match status" value="1"/>
</dbReference>
<dbReference type="SUPFAM" id="SSF142695">
    <property type="entry name" value="RibA-like"/>
    <property type="match status" value="1"/>
</dbReference>
<accession>Q1IFL5</accession>
<comment type="function">
    <text evidence="1">Catalyzes the conversion of GTP to 2,5-diamino-6-ribosylamino-4(3H)-pyrimidinone 5'-phosphate (DARP), formate and pyrophosphate.</text>
</comment>
<comment type="catalytic activity">
    <reaction evidence="1">
        <text>GTP + 4 H2O = 2,5-diamino-6-hydroxy-4-(5-phosphoribosylamino)-pyrimidine + formate + 2 phosphate + 3 H(+)</text>
        <dbReference type="Rhea" id="RHEA:23704"/>
        <dbReference type="ChEBI" id="CHEBI:15377"/>
        <dbReference type="ChEBI" id="CHEBI:15378"/>
        <dbReference type="ChEBI" id="CHEBI:15740"/>
        <dbReference type="ChEBI" id="CHEBI:37565"/>
        <dbReference type="ChEBI" id="CHEBI:43474"/>
        <dbReference type="ChEBI" id="CHEBI:58614"/>
        <dbReference type="EC" id="3.5.4.25"/>
    </reaction>
</comment>
<comment type="cofactor">
    <cofactor evidence="1">
        <name>Zn(2+)</name>
        <dbReference type="ChEBI" id="CHEBI:29105"/>
    </cofactor>
    <text evidence="1">Binds 1 zinc ion per subunit.</text>
</comment>
<comment type="pathway">
    <text evidence="1">Cofactor biosynthesis; riboflavin biosynthesis; 5-amino-6-(D-ribitylamino)uracil from GTP: step 1/4.</text>
</comment>
<comment type="similarity">
    <text evidence="1">Belongs to the GTP cyclohydrolase II family.</text>
</comment>
<feature type="chain" id="PRO_1000040574" description="GTP cyclohydrolase-2">
    <location>
        <begin position="1"/>
        <end position="205"/>
    </location>
</feature>
<feature type="active site" description="Proton acceptor" evidence="1">
    <location>
        <position position="126"/>
    </location>
</feature>
<feature type="active site" description="Nucleophile" evidence="1">
    <location>
        <position position="128"/>
    </location>
</feature>
<feature type="binding site" evidence="1">
    <location>
        <begin position="49"/>
        <end position="53"/>
    </location>
    <ligand>
        <name>GTP</name>
        <dbReference type="ChEBI" id="CHEBI:37565"/>
    </ligand>
</feature>
<feature type="binding site" evidence="1">
    <location>
        <position position="54"/>
    </location>
    <ligand>
        <name>Zn(2+)</name>
        <dbReference type="ChEBI" id="CHEBI:29105"/>
        <note>catalytic</note>
    </ligand>
</feature>
<feature type="binding site" evidence="1">
    <location>
        <position position="65"/>
    </location>
    <ligand>
        <name>Zn(2+)</name>
        <dbReference type="ChEBI" id="CHEBI:29105"/>
        <note>catalytic</note>
    </ligand>
</feature>
<feature type="binding site" evidence="1">
    <location>
        <position position="67"/>
    </location>
    <ligand>
        <name>Zn(2+)</name>
        <dbReference type="ChEBI" id="CHEBI:29105"/>
        <note>catalytic</note>
    </ligand>
</feature>
<feature type="binding site" evidence="1">
    <location>
        <position position="70"/>
    </location>
    <ligand>
        <name>GTP</name>
        <dbReference type="ChEBI" id="CHEBI:37565"/>
    </ligand>
</feature>
<feature type="binding site" evidence="1">
    <location>
        <begin position="92"/>
        <end position="94"/>
    </location>
    <ligand>
        <name>GTP</name>
        <dbReference type="ChEBI" id="CHEBI:37565"/>
    </ligand>
</feature>
<feature type="binding site" evidence="1">
    <location>
        <position position="114"/>
    </location>
    <ligand>
        <name>GTP</name>
        <dbReference type="ChEBI" id="CHEBI:37565"/>
    </ligand>
</feature>
<feature type="binding site" evidence="1">
    <location>
        <position position="149"/>
    </location>
    <ligand>
        <name>GTP</name>
        <dbReference type="ChEBI" id="CHEBI:37565"/>
    </ligand>
</feature>
<feature type="binding site" evidence="1">
    <location>
        <position position="154"/>
    </location>
    <ligand>
        <name>GTP</name>
        <dbReference type="ChEBI" id="CHEBI:37565"/>
    </ligand>
</feature>